<accession>B5F5L4</accession>
<proteinExistence type="inferred from homology"/>
<feature type="chain" id="PRO_1000093077" description="S-adenosylmethionine synthase">
    <location>
        <begin position="1"/>
        <end position="384"/>
    </location>
</feature>
<feature type="region of interest" description="Flexible loop" evidence="1">
    <location>
        <begin position="99"/>
        <end position="109"/>
    </location>
</feature>
<feature type="binding site" description="in other chain" evidence="1">
    <location>
        <position position="15"/>
    </location>
    <ligand>
        <name>ATP</name>
        <dbReference type="ChEBI" id="CHEBI:30616"/>
        <note>ligand shared between two neighboring subunits</note>
    </ligand>
</feature>
<feature type="binding site" evidence="1">
    <location>
        <position position="17"/>
    </location>
    <ligand>
        <name>Mg(2+)</name>
        <dbReference type="ChEBI" id="CHEBI:18420"/>
    </ligand>
</feature>
<feature type="binding site" evidence="1">
    <location>
        <position position="43"/>
    </location>
    <ligand>
        <name>K(+)</name>
        <dbReference type="ChEBI" id="CHEBI:29103"/>
    </ligand>
</feature>
<feature type="binding site" description="in other chain" evidence="1">
    <location>
        <position position="56"/>
    </location>
    <ligand>
        <name>L-methionine</name>
        <dbReference type="ChEBI" id="CHEBI:57844"/>
        <note>ligand shared between two neighboring subunits</note>
    </ligand>
</feature>
<feature type="binding site" description="in other chain" evidence="1">
    <location>
        <position position="99"/>
    </location>
    <ligand>
        <name>L-methionine</name>
        <dbReference type="ChEBI" id="CHEBI:57844"/>
        <note>ligand shared between two neighboring subunits</note>
    </ligand>
</feature>
<feature type="binding site" description="in other chain" evidence="1">
    <location>
        <begin position="164"/>
        <end position="166"/>
    </location>
    <ligand>
        <name>ATP</name>
        <dbReference type="ChEBI" id="CHEBI:30616"/>
        <note>ligand shared between two neighboring subunits</note>
    </ligand>
</feature>
<feature type="binding site" description="in other chain" evidence="1">
    <location>
        <begin position="230"/>
        <end position="231"/>
    </location>
    <ligand>
        <name>ATP</name>
        <dbReference type="ChEBI" id="CHEBI:30616"/>
        <note>ligand shared between two neighboring subunits</note>
    </ligand>
</feature>
<feature type="binding site" evidence="1">
    <location>
        <position position="239"/>
    </location>
    <ligand>
        <name>ATP</name>
        <dbReference type="ChEBI" id="CHEBI:30616"/>
        <note>ligand shared between two neighboring subunits</note>
    </ligand>
</feature>
<feature type="binding site" evidence="1">
    <location>
        <position position="239"/>
    </location>
    <ligand>
        <name>L-methionine</name>
        <dbReference type="ChEBI" id="CHEBI:57844"/>
        <note>ligand shared between two neighboring subunits</note>
    </ligand>
</feature>
<feature type="binding site" description="in other chain" evidence="1">
    <location>
        <begin position="245"/>
        <end position="246"/>
    </location>
    <ligand>
        <name>ATP</name>
        <dbReference type="ChEBI" id="CHEBI:30616"/>
        <note>ligand shared between two neighboring subunits</note>
    </ligand>
</feature>
<feature type="binding site" evidence="1">
    <location>
        <position position="262"/>
    </location>
    <ligand>
        <name>ATP</name>
        <dbReference type="ChEBI" id="CHEBI:30616"/>
        <note>ligand shared between two neighboring subunits</note>
    </ligand>
</feature>
<feature type="binding site" evidence="1">
    <location>
        <position position="266"/>
    </location>
    <ligand>
        <name>ATP</name>
        <dbReference type="ChEBI" id="CHEBI:30616"/>
        <note>ligand shared between two neighboring subunits</note>
    </ligand>
</feature>
<feature type="binding site" description="in other chain" evidence="1">
    <location>
        <position position="270"/>
    </location>
    <ligand>
        <name>L-methionine</name>
        <dbReference type="ChEBI" id="CHEBI:57844"/>
        <note>ligand shared between two neighboring subunits</note>
    </ligand>
</feature>
<sequence length="384" mass="41939">MAKHLFTSESVSEGHPDKIADQISDAVLDAILQQDPKARVACETYVKTGMVLVGGEITTSAWVDIEEITRNTVREIGYVHSDMGFDANSCAVLSAIGKQSPDINQGVDRADPLEQGAGDQGLMFGYATNETDVLMPAPVTYAHRLVQRQAEVRKNGTLPWLRPDAKSQVTFQYDDGKIVGIDAVVLSTQHAEDIDQKSLQEAVMEEIIKPILPSEWLNTSTKFFINPTGRFVIGGPMGDCGLTGRKIIVDTYGGMARHGGGAFSGKDPSKVDRSAAYAARYVAKNIVAAGLADRCEIQVSYAIGVAEPTSIMVETFGTEKVPAEQLILLVREFFDLRPYGLIQMLDLLHPIYKETAAYGHFGRENFPWEKTDKAQLLRDAAGLK</sequence>
<evidence type="ECO:0000255" key="1">
    <source>
        <dbReference type="HAMAP-Rule" id="MF_00086"/>
    </source>
</evidence>
<dbReference type="EC" id="2.5.1.6" evidence="1"/>
<dbReference type="EMBL" id="CP001138">
    <property type="protein sequence ID" value="ACH51819.1"/>
    <property type="molecule type" value="Genomic_DNA"/>
</dbReference>
<dbReference type="RefSeq" id="WP_001062143.1">
    <property type="nucleotide sequence ID" value="NC_011149.1"/>
</dbReference>
<dbReference type="SMR" id="B5F5L4"/>
<dbReference type="KEGG" id="sea:SeAg_B3252"/>
<dbReference type="HOGENOM" id="CLU_041802_1_1_6"/>
<dbReference type="UniPathway" id="UPA00315">
    <property type="reaction ID" value="UER00080"/>
</dbReference>
<dbReference type="Proteomes" id="UP000008819">
    <property type="component" value="Chromosome"/>
</dbReference>
<dbReference type="GO" id="GO:0005737">
    <property type="term" value="C:cytoplasm"/>
    <property type="evidence" value="ECO:0007669"/>
    <property type="project" value="UniProtKB-SubCell"/>
</dbReference>
<dbReference type="GO" id="GO:0005524">
    <property type="term" value="F:ATP binding"/>
    <property type="evidence" value="ECO:0007669"/>
    <property type="project" value="UniProtKB-UniRule"/>
</dbReference>
<dbReference type="GO" id="GO:0000287">
    <property type="term" value="F:magnesium ion binding"/>
    <property type="evidence" value="ECO:0007669"/>
    <property type="project" value="UniProtKB-UniRule"/>
</dbReference>
<dbReference type="GO" id="GO:0004478">
    <property type="term" value="F:methionine adenosyltransferase activity"/>
    <property type="evidence" value="ECO:0007669"/>
    <property type="project" value="UniProtKB-UniRule"/>
</dbReference>
<dbReference type="GO" id="GO:0006730">
    <property type="term" value="P:one-carbon metabolic process"/>
    <property type="evidence" value="ECO:0007669"/>
    <property type="project" value="UniProtKB-KW"/>
</dbReference>
<dbReference type="GO" id="GO:0006556">
    <property type="term" value="P:S-adenosylmethionine biosynthetic process"/>
    <property type="evidence" value="ECO:0007669"/>
    <property type="project" value="UniProtKB-UniRule"/>
</dbReference>
<dbReference type="CDD" id="cd18079">
    <property type="entry name" value="S-AdoMet_synt"/>
    <property type="match status" value="1"/>
</dbReference>
<dbReference type="FunFam" id="3.30.300.10:FF:000001">
    <property type="entry name" value="S-adenosylmethionine synthase"/>
    <property type="match status" value="1"/>
</dbReference>
<dbReference type="FunFam" id="3.30.300.10:FF:000003">
    <property type="entry name" value="S-adenosylmethionine synthase"/>
    <property type="match status" value="1"/>
</dbReference>
<dbReference type="Gene3D" id="3.30.300.10">
    <property type="match status" value="3"/>
</dbReference>
<dbReference type="HAMAP" id="MF_00086">
    <property type="entry name" value="S_AdoMet_synth1"/>
    <property type="match status" value="1"/>
</dbReference>
<dbReference type="InterPro" id="IPR022631">
    <property type="entry name" value="ADOMET_SYNTHASE_CS"/>
</dbReference>
<dbReference type="InterPro" id="IPR022630">
    <property type="entry name" value="S-AdoMet_synt_C"/>
</dbReference>
<dbReference type="InterPro" id="IPR022629">
    <property type="entry name" value="S-AdoMet_synt_central"/>
</dbReference>
<dbReference type="InterPro" id="IPR022628">
    <property type="entry name" value="S-AdoMet_synt_N"/>
</dbReference>
<dbReference type="InterPro" id="IPR002133">
    <property type="entry name" value="S-AdoMet_synthetase"/>
</dbReference>
<dbReference type="InterPro" id="IPR022636">
    <property type="entry name" value="S-AdoMet_synthetase_sfam"/>
</dbReference>
<dbReference type="NCBIfam" id="TIGR01034">
    <property type="entry name" value="metK"/>
    <property type="match status" value="1"/>
</dbReference>
<dbReference type="PANTHER" id="PTHR11964">
    <property type="entry name" value="S-ADENOSYLMETHIONINE SYNTHETASE"/>
    <property type="match status" value="1"/>
</dbReference>
<dbReference type="Pfam" id="PF02773">
    <property type="entry name" value="S-AdoMet_synt_C"/>
    <property type="match status" value="1"/>
</dbReference>
<dbReference type="Pfam" id="PF02772">
    <property type="entry name" value="S-AdoMet_synt_M"/>
    <property type="match status" value="1"/>
</dbReference>
<dbReference type="Pfam" id="PF00438">
    <property type="entry name" value="S-AdoMet_synt_N"/>
    <property type="match status" value="1"/>
</dbReference>
<dbReference type="PIRSF" id="PIRSF000497">
    <property type="entry name" value="MAT"/>
    <property type="match status" value="1"/>
</dbReference>
<dbReference type="SUPFAM" id="SSF55973">
    <property type="entry name" value="S-adenosylmethionine synthetase"/>
    <property type="match status" value="3"/>
</dbReference>
<dbReference type="PROSITE" id="PS00376">
    <property type="entry name" value="ADOMET_SYNTHASE_1"/>
    <property type="match status" value="1"/>
</dbReference>
<dbReference type="PROSITE" id="PS00377">
    <property type="entry name" value="ADOMET_SYNTHASE_2"/>
    <property type="match status" value="1"/>
</dbReference>
<name>METK_SALA4</name>
<keyword id="KW-0067">ATP-binding</keyword>
<keyword id="KW-0963">Cytoplasm</keyword>
<keyword id="KW-0460">Magnesium</keyword>
<keyword id="KW-0479">Metal-binding</keyword>
<keyword id="KW-0547">Nucleotide-binding</keyword>
<keyword id="KW-0554">One-carbon metabolism</keyword>
<keyword id="KW-0630">Potassium</keyword>
<keyword id="KW-0808">Transferase</keyword>
<comment type="function">
    <text evidence="1">Catalyzes the formation of S-adenosylmethionine (AdoMet) from methionine and ATP. The overall synthetic reaction is composed of two sequential steps, AdoMet formation and the subsequent tripolyphosphate hydrolysis which occurs prior to release of AdoMet from the enzyme.</text>
</comment>
<comment type="catalytic activity">
    <reaction evidence="1">
        <text>L-methionine + ATP + H2O = S-adenosyl-L-methionine + phosphate + diphosphate</text>
        <dbReference type="Rhea" id="RHEA:21080"/>
        <dbReference type="ChEBI" id="CHEBI:15377"/>
        <dbReference type="ChEBI" id="CHEBI:30616"/>
        <dbReference type="ChEBI" id="CHEBI:33019"/>
        <dbReference type="ChEBI" id="CHEBI:43474"/>
        <dbReference type="ChEBI" id="CHEBI:57844"/>
        <dbReference type="ChEBI" id="CHEBI:59789"/>
        <dbReference type="EC" id="2.5.1.6"/>
    </reaction>
</comment>
<comment type="cofactor">
    <cofactor evidence="1">
        <name>Mg(2+)</name>
        <dbReference type="ChEBI" id="CHEBI:18420"/>
    </cofactor>
    <text evidence="1">Binds 2 divalent ions per subunit.</text>
</comment>
<comment type="cofactor">
    <cofactor evidence="1">
        <name>K(+)</name>
        <dbReference type="ChEBI" id="CHEBI:29103"/>
    </cofactor>
    <text evidence="1">Binds 1 potassium ion per subunit.</text>
</comment>
<comment type="pathway">
    <text evidence="1">Amino-acid biosynthesis; S-adenosyl-L-methionine biosynthesis; S-adenosyl-L-methionine from L-methionine: step 1/1.</text>
</comment>
<comment type="subunit">
    <text evidence="1">Homotetramer; dimer of dimers.</text>
</comment>
<comment type="subcellular location">
    <subcellularLocation>
        <location evidence="1">Cytoplasm</location>
    </subcellularLocation>
</comment>
<comment type="similarity">
    <text evidence="1">Belongs to the AdoMet synthase family.</text>
</comment>
<reference key="1">
    <citation type="journal article" date="2011" name="J. Bacteriol.">
        <title>Comparative genomics of 28 Salmonella enterica isolates: evidence for CRISPR-mediated adaptive sublineage evolution.</title>
        <authorList>
            <person name="Fricke W.F."/>
            <person name="Mammel M.K."/>
            <person name="McDermott P.F."/>
            <person name="Tartera C."/>
            <person name="White D.G."/>
            <person name="Leclerc J.E."/>
            <person name="Ravel J."/>
            <person name="Cebula T.A."/>
        </authorList>
    </citation>
    <scope>NUCLEOTIDE SEQUENCE [LARGE SCALE GENOMIC DNA]</scope>
    <source>
        <strain>SL483</strain>
    </source>
</reference>
<protein>
    <recommendedName>
        <fullName evidence="1">S-adenosylmethionine synthase</fullName>
        <shortName evidence="1">AdoMet synthase</shortName>
        <ecNumber evidence="1">2.5.1.6</ecNumber>
    </recommendedName>
    <alternativeName>
        <fullName evidence="1">MAT</fullName>
    </alternativeName>
    <alternativeName>
        <fullName evidence="1">Methionine adenosyltransferase</fullName>
    </alternativeName>
</protein>
<organism>
    <name type="scientific">Salmonella agona (strain SL483)</name>
    <dbReference type="NCBI Taxonomy" id="454166"/>
    <lineage>
        <taxon>Bacteria</taxon>
        <taxon>Pseudomonadati</taxon>
        <taxon>Pseudomonadota</taxon>
        <taxon>Gammaproteobacteria</taxon>
        <taxon>Enterobacterales</taxon>
        <taxon>Enterobacteriaceae</taxon>
        <taxon>Salmonella</taxon>
    </lineage>
</organism>
<gene>
    <name evidence="1" type="primary">metK</name>
    <name type="ordered locus">SeAg_B3252</name>
</gene>